<accession>B9DIU4</accession>
<dbReference type="EC" id="6.3.4.5" evidence="1"/>
<dbReference type="EMBL" id="AM295250">
    <property type="protein sequence ID" value="CAL27483.1"/>
    <property type="molecule type" value="Genomic_DNA"/>
</dbReference>
<dbReference type="RefSeq" id="WP_015899827.1">
    <property type="nucleotide sequence ID" value="NC_012121.1"/>
</dbReference>
<dbReference type="SMR" id="B9DIU4"/>
<dbReference type="GeneID" id="93795508"/>
<dbReference type="KEGG" id="sca:SCA_0569"/>
<dbReference type="eggNOG" id="COG0137">
    <property type="taxonomic scope" value="Bacteria"/>
</dbReference>
<dbReference type="HOGENOM" id="CLU_032784_4_2_9"/>
<dbReference type="OrthoDB" id="9801641at2"/>
<dbReference type="BioCyc" id="SCAR396513:SCA_RS02910-MONOMER"/>
<dbReference type="UniPathway" id="UPA00068">
    <property type="reaction ID" value="UER00113"/>
</dbReference>
<dbReference type="Proteomes" id="UP000000444">
    <property type="component" value="Chromosome"/>
</dbReference>
<dbReference type="GO" id="GO:0005737">
    <property type="term" value="C:cytoplasm"/>
    <property type="evidence" value="ECO:0007669"/>
    <property type="project" value="UniProtKB-SubCell"/>
</dbReference>
<dbReference type="GO" id="GO:0004055">
    <property type="term" value="F:argininosuccinate synthase activity"/>
    <property type="evidence" value="ECO:0007669"/>
    <property type="project" value="UniProtKB-UniRule"/>
</dbReference>
<dbReference type="GO" id="GO:0005524">
    <property type="term" value="F:ATP binding"/>
    <property type="evidence" value="ECO:0007669"/>
    <property type="project" value="UniProtKB-UniRule"/>
</dbReference>
<dbReference type="GO" id="GO:0000053">
    <property type="term" value="P:argininosuccinate metabolic process"/>
    <property type="evidence" value="ECO:0007669"/>
    <property type="project" value="TreeGrafter"/>
</dbReference>
<dbReference type="GO" id="GO:0006526">
    <property type="term" value="P:L-arginine biosynthetic process"/>
    <property type="evidence" value="ECO:0007669"/>
    <property type="project" value="UniProtKB-UniRule"/>
</dbReference>
<dbReference type="GO" id="GO:0000050">
    <property type="term" value="P:urea cycle"/>
    <property type="evidence" value="ECO:0007669"/>
    <property type="project" value="TreeGrafter"/>
</dbReference>
<dbReference type="CDD" id="cd01999">
    <property type="entry name" value="ASS"/>
    <property type="match status" value="1"/>
</dbReference>
<dbReference type="FunFam" id="1.20.5.470:FF:000002">
    <property type="entry name" value="Argininosuccinate synthase"/>
    <property type="match status" value="1"/>
</dbReference>
<dbReference type="FunFam" id="3.40.50.620:FF:000038">
    <property type="entry name" value="Argininosuccinate synthase"/>
    <property type="match status" value="1"/>
</dbReference>
<dbReference type="FunFam" id="3.90.1260.10:FF:000007">
    <property type="entry name" value="Argininosuccinate synthase"/>
    <property type="match status" value="1"/>
</dbReference>
<dbReference type="Gene3D" id="3.90.1260.10">
    <property type="entry name" value="Argininosuccinate synthetase, chain A, domain 2"/>
    <property type="match status" value="1"/>
</dbReference>
<dbReference type="Gene3D" id="3.40.50.620">
    <property type="entry name" value="HUPs"/>
    <property type="match status" value="1"/>
</dbReference>
<dbReference type="Gene3D" id="1.20.5.470">
    <property type="entry name" value="Single helix bin"/>
    <property type="match status" value="1"/>
</dbReference>
<dbReference type="HAMAP" id="MF_00005">
    <property type="entry name" value="Arg_succ_synth_type1"/>
    <property type="match status" value="1"/>
</dbReference>
<dbReference type="InterPro" id="IPR048268">
    <property type="entry name" value="Arginosuc_syn_C"/>
</dbReference>
<dbReference type="InterPro" id="IPR048267">
    <property type="entry name" value="Arginosuc_syn_N"/>
</dbReference>
<dbReference type="InterPro" id="IPR001518">
    <property type="entry name" value="Arginosuc_synth"/>
</dbReference>
<dbReference type="InterPro" id="IPR018223">
    <property type="entry name" value="Arginosuc_synth_CS"/>
</dbReference>
<dbReference type="InterPro" id="IPR023434">
    <property type="entry name" value="Arginosuc_synth_type_1_subfam"/>
</dbReference>
<dbReference type="InterPro" id="IPR024074">
    <property type="entry name" value="AS_cat/multimer_dom_body"/>
</dbReference>
<dbReference type="InterPro" id="IPR014729">
    <property type="entry name" value="Rossmann-like_a/b/a_fold"/>
</dbReference>
<dbReference type="NCBIfam" id="TIGR00032">
    <property type="entry name" value="argG"/>
    <property type="match status" value="1"/>
</dbReference>
<dbReference type="NCBIfam" id="NF001770">
    <property type="entry name" value="PRK00509.1"/>
    <property type="match status" value="1"/>
</dbReference>
<dbReference type="PANTHER" id="PTHR11587">
    <property type="entry name" value="ARGININOSUCCINATE SYNTHASE"/>
    <property type="match status" value="1"/>
</dbReference>
<dbReference type="PANTHER" id="PTHR11587:SF2">
    <property type="entry name" value="ARGININOSUCCINATE SYNTHASE"/>
    <property type="match status" value="1"/>
</dbReference>
<dbReference type="Pfam" id="PF20979">
    <property type="entry name" value="Arginosuc_syn_C"/>
    <property type="match status" value="1"/>
</dbReference>
<dbReference type="Pfam" id="PF00764">
    <property type="entry name" value="Arginosuc_synth"/>
    <property type="match status" value="1"/>
</dbReference>
<dbReference type="SUPFAM" id="SSF52402">
    <property type="entry name" value="Adenine nucleotide alpha hydrolases-like"/>
    <property type="match status" value="1"/>
</dbReference>
<dbReference type="SUPFAM" id="SSF69864">
    <property type="entry name" value="Argininosuccinate synthetase, C-terminal domain"/>
    <property type="match status" value="1"/>
</dbReference>
<dbReference type="PROSITE" id="PS00564">
    <property type="entry name" value="ARGININOSUCCIN_SYN_1"/>
    <property type="match status" value="1"/>
</dbReference>
<dbReference type="PROSITE" id="PS00565">
    <property type="entry name" value="ARGININOSUCCIN_SYN_2"/>
    <property type="match status" value="1"/>
</dbReference>
<proteinExistence type="inferred from homology"/>
<comment type="catalytic activity">
    <reaction evidence="1">
        <text>L-citrulline + L-aspartate + ATP = 2-(N(omega)-L-arginino)succinate + AMP + diphosphate + H(+)</text>
        <dbReference type="Rhea" id="RHEA:10932"/>
        <dbReference type="ChEBI" id="CHEBI:15378"/>
        <dbReference type="ChEBI" id="CHEBI:29991"/>
        <dbReference type="ChEBI" id="CHEBI:30616"/>
        <dbReference type="ChEBI" id="CHEBI:33019"/>
        <dbReference type="ChEBI" id="CHEBI:57472"/>
        <dbReference type="ChEBI" id="CHEBI:57743"/>
        <dbReference type="ChEBI" id="CHEBI:456215"/>
        <dbReference type="EC" id="6.3.4.5"/>
    </reaction>
</comment>
<comment type="pathway">
    <text evidence="1">Amino-acid biosynthesis; L-arginine biosynthesis; L-arginine from L-ornithine and carbamoyl phosphate: step 2/3.</text>
</comment>
<comment type="subunit">
    <text evidence="1">Homotetramer.</text>
</comment>
<comment type="subcellular location">
    <subcellularLocation>
        <location evidence="1">Cytoplasm</location>
    </subcellularLocation>
</comment>
<comment type="similarity">
    <text evidence="1">Belongs to the argininosuccinate synthase family. Type 1 subfamily.</text>
</comment>
<organism>
    <name type="scientific">Staphylococcus carnosus (strain TM300)</name>
    <dbReference type="NCBI Taxonomy" id="396513"/>
    <lineage>
        <taxon>Bacteria</taxon>
        <taxon>Bacillati</taxon>
        <taxon>Bacillota</taxon>
        <taxon>Bacilli</taxon>
        <taxon>Bacillales</taxon>
        <taxon>Staphylococcaceae</taxon>
        <taxon>Staphylococcus</taxon>
    </lineage>
</organism>
<reference key="1">
    <citation type="journal article" date="2009" name="Appl. Environ. Microbiol.">
        <title>Genome analysis of the meat starter culture bacterium Staphylococcus carnosus TM300.</title>
        <authorList>
            <person name="Rosenstein R."/>
            <person name="Nerz C."/>
            <person name="Biswas L."/>
            <person name="Resch A."/>
            <person name="Raddatz G."/>
            <person name="Schuster S.C."/>
            <person name="Goetz F."/>
        </authorList>
    </citation>
    <scope>NUCLEOTIDE SEQUENCE [LARGE SCALE GENOMIC DNA]</scope>
    <source>
        <strain>TM300</strain>
    </source>
</reference>
<sequence>MKEKIVLAYSGGLDTSVAVQWLIDKGYDVVACCLDVGEGKDLDEVYQKALDMGAIECYIIDATEEFSDEYVSYAIKGNLMYENTYPVVSALSRPLISKKLVEIAEKTDAVGIAHGCTGKGNDQVRFEVAIKALNPELKVFAPVRAWGWSREEEIDYAIQHNIPVPINHDSPYSIDQNLWGRANECGILEDPYAAPPADAFDLTREIEDTPDTPDEIVIHFEKGLPVSIDDKAFPLDELILYLNDLAGKHGIGRIDHVENRLVGIKSREIYETPGAEVILKAHKALETITLTKDVAHFKPVIEKQFAEQTYNGLWFSPLTDSLKLFIDSTQEHVTGDVRVKLFKGNATVNGRRSPYSLYNEKLATYTKEDAFNQEAAVGFIEIYGLPTEVNSMLHGGYSNEQ</sequence>
<keyword id="KW-0028">Amino-acid biosynthesis</keyword>
<keyword id="KW-0055">Arginine biosynthesis</keyword>
<keyword id="KW-0067">ATP-binding</keyword>
<keyword id="KW-0963">Cytoplasm</keyword>
<keyword id="KW-0436">Ligase</keyword>
<keyword id="KW-0547">Nucleotide-binding</keyword>
<keyword id="KW-1185">Reference proteome</keyword>
<protein>
    <recommendedName>
        <fullName evidence="1">Argininosuccinate synthase</fullName>
        <ecNumber evidence="1">6.3.4.5</ecNumber>
    </recommendedName>
    <alternativeName>
        <fullName evidence="1">Citrulline--aspartate ligase</fullName>
    </alternativeName>
</protein>
<name>ASSY_STACT</name>
<feature type="chain" id="PRO_1000116292" description="Argininosuccinate synthase">
    <location>
        <begin position="1"/>
        <end position="401"/>
    </location>
</feature>
<feature type="binding site" evidence="1">
    <location>
        <begin position="8"/>
        <end position="16"/>
    </location>
    <ligand>
        <name>ATP</name>
        <dbReference type="ChEBI" id="CHEBI:30616"/>
    </ligand>
</feature>
<feature type="binding site" evidence="1">
    <location>
        <position position="85"/>
    </location>
    <ligand>
        <name>L-citrulline</name>
        <dbReference type="ChEBI" id="CHEBI:57743"/>
    </ligand>
</feature>
<feature type="binding site" evidence="1">
    <location>
        <position position="115"/>
    </location>
    <ligand>
        <name>ATP</name>
        <dbReference type="ChEBI" id="CHEBI:30616"/>
    </ligand>
</feature>
<feature type="binding site" evidence="1">
    <location>
        <position position="117"/>
    </location>
    <ligand>
        <name>L-aspartate</name>
        <dbReference type="ChEBI" id="CHEBI:29991"/>
    </ligand>
</feature>
<feature type="binding site" evidence="1">
    <location>
        <position position="121"/>
    </location>
    <ligand>
        <name>L-aspartate</name>
        <dbReference type="ChEBI" id="CHEBI:29991"/>
    </ligand>
</feature>
<feature type="binding site" evidence="1">
    <location>
        <position position="121"/>
    </location>
    <ligand>
        <name>L-citrulline</name>
        <dbReference type="ChEBI" id="CHEBI:57743"/>
    </ligand>
</feature>
<feature type="binding site" evidence="1">
    <location>
        <position position="122"/>
    </location>
    <ligand>
        <name>L-aspartate</name>
        <dbReference type="ChEBI" id="CHEBI:29991"/>
    </ligand>
</feature>
<feature type="binding site" evidence="1">
    <location>
        <position position="125"/>
    </location>
    <ligand>
        <name>L-citrulline</name>
        <dbReference type="ChEBI" id="CHEBI:57743"/>
    </ligand>
</feature>
<feature type="binding site" evidence="1">
    <location>
        <position position="173"/>
    </location>
    <ligand>
        <name>L-citrulline</name>
        <dbReference type="ChEBI" id="CHEBI:57743"/>
    </ligand>
</feature>
<feature type="binding site" evidence="1">
    <location>
        <position position="258"/>
    </location>
    <ligand>
        <name>L-citrulline</name>
        <dbReference type="ChEBI" id="CHEBI:57743"/>
    </ligand>
</feature>
<feature type="binding site" evidence="1">
    <location>
        <position position="270"/>
    </location>
    <ligand>
        <name>L-citrulline</name>
        <dbReference type="ChEBI" id="CHEBI:57743"/>
    </ligand>
</feature>
<gene>
    <name evidence="1" type="primary">argG</name>
    <name type="ordered locus">Sca_0569</name>
</gene>
<evidence type="ECO:0000255" key="1">
    <source>
        <dbReference type="HAMAP-Rule" id="MF_00005"/>
    </source>
</evidence>